<comment type="function">
    <text evidence="1">Cell wall formation. Catalyzes the addition of glutamate to the nucleotide precursor UDP-N-acetylmuramoyl-L-alanine (UMA).</text>
</comment>
<comment type="catalytic activity">
    <reaction evidence="1">
        <text>UDP-N-acetyl-alpha-D-muramoyl-L-alanine + D-glutamate + ATP = UDP-N-acetyl-alpha-D-muramoyl-L-alanyl-D-glutamate + ADP + phosphate + H(+)</text>
        <dbReference type="Rhea" id="RHEA:16429"/>
        <dbReference type="ChEBI" id="CHEBI:15378"/>
        <dbReference type="ChEBI" id="CHEBI:29986"/>
        <dbReference type="ChEBI" id="CHEBI:30616"/>
        <dbReference type="ChEBI" id="CHEBI:43474"/>
        <dbReference type="ChEBI" id="CHEBI:83898"/>
        <dbReference type="ChEBI" id="CHEBI:83900"/>
        <dbReference type="ChEBI" id="CHEBI:456216"/>
        <dbReference type="EC" id="6.3.2.9"/>
    </reaction>
</comment>
<comment type="pathway">
    <text evidence="1">Cell wall biogenesis; peptidoglycan biosynthesis.</text>
</comment>
<comment type="subcellular location">
    <subcellularLocation>
        <location evidence="1">Cytoplasm</location>
    </subcellularLocation>
</comment>
<comment type="similarity">
    <text evidence="1">Belongs to the MurCDEF family.</text>
</comment>
<dbReference type="EC" id="6.3.2.9" evidence="1"/>
<dbReference type="EMBL" id="AE017223">
    <property type="protein sequence ID" value="AAX74758.1"/>
    <property type="molecule type" value="Genomic_DNA"/>
</dbReference>
<dbReference type="RefSeq" id="WP_002964541.1">
    <property type="nucleotide sequence ID" value="NC_006932.1"/>
</dbReference>
<dbReference type="SMR" id="Q57C76"/>
<dbReference type="EnsemblBacteria" id="AAX74758">
    <property type="protein sequence ID" value="AAX74758"/>
    <property type="gene ID" value="BruAb1_1428"/>
</dbReference>
<dbReference type="GeneID" id="93016269"/>
<dbReference type="KEGG" id="bmb:BruAb1_1428"/>
<dbReference type="HOGENOM" id="CLU_032540_3_0_5"/>
<dbReference type="UniPathway" id="UPA00219"/>
<dbReference type="Proteomes" id="UP000000540">
    <property type="component" value="Chromosome I"/>
</dbReference>
<dbReference type="GO" id="GO:0005737">
    <property type="term" value="C:cytoplasm"/>
    <property type="evidence" value="ECO:0007669"/>
    <property type="project" value="UniProtKB-SubCell"/>
</dbReference>
<dbReference type="GO" id="GO:0005524">
    <property type="term" value="F:ATP binding"/>
    <property type="evidence" value="ECO:0007669"/>
    <property type="project" value="UniProtKB-UniRule"/>
</dbReference>
<dbReference type="GO" id="GO:0004326">
    <property type="term" value="F:tetrahydrofolylpolyglutamate synthase activity"/>
    <property type="evidence" value="ECO:0007669"/>
    <property type="project" value="InterPro"/>
</dbReference>
<dbReference type="GO" id="GO:0008764">
    <property type="term" value="F:UDP-N-acetylmuramoylalanine-D-glutamate ligase activity"/>
    <property type="evidence" value="ECO:0007669"/>
    <property type="project" value="UniProtKB-UniRule"/>
</dbReference>
<dbReference type="GO" id="GO:0051301">
    <property type="term" value="P:cell division"/>
    <property type="evidence" value="ECO:0007669"/>
    <property type="project" value="UniProtKB-KW"/>
</dbReference>
<dbReference type="GO" id="GO:0071555">
    <property type="term" value="P:cell wall organization"/>
    <property type="evidence" value="ECO:0007669"/>
    <property type="project" value="UniProtKB-KW"/>
</dbReference>
<dbReference type="GO" id="GO:0009252">
    <property type="term" value="P:peptidoglycan biosynthetic process"/>
    <property type="evidence" value="ECO:0007669"/>
    <property type="project" value="UniProtKB-UniRule"/>
</dbReference>
<dbReference type="GO" id="GO:0008360">
    <property type="term" value="P:regulation of cell shape"/>
    <property type="evidence" value="ECO:0007669"/>
    <property type="project" value="UniProtKB-KW"/>
</dbReference>
<dbReference type="Gene3D" id="3.90.190.20">
    <property type="entry name" value="Mur ligase, C-terminal domain"/>
    <property type="match status" value="1"/>
</dbReference>
<dbReference type="Gene3D" id="3.40.1190.10">
    <property type="entry name" value="Mur-like, catalytic domain"/>
    <property type="match status" value="1"/>
</dbReference>
<dbReference type="Gene3D" id="3.40.50.720">
    <property type="entry name" value="NAD(P)-binding Rossmann-like Domain"/>
    <property type="match status" value="1"/>
</dbReference>
<dbReference type="HAMAP" id="MF_00639">
    <property type="entry name" value="MurD"/>
    <property type="match status" value="1"/>
</dbReference>
<dbReference type="InterPro" id="IPR018109">
    <property type="entry name" value="Folylpolyglutamate_synth_CS"/>
</dbReference>
<dbReference type="InterPro" id="IPR036565">
    <property type="entry name" value="Mur-like_cat_sf"/>
</dbReference>
<dbReference type="InterPro" id="IPR004101">
    <property type="entry name" value="Mur_ligase_C"/>
</dbReference>
<dbReference type="InterPro" id="IPR036615">
    <property type="entry name" value="Mur_ligase_C_dom_sf"/>
</dbReference>
<dbReference type="InterPro" id="IPR013221">
    <property type="entry name" value="Mur_ligase_cen"/>
</dbReference>
<dbReference type="InterPro" id="IPR005762">
    <property type="entry name" value="MurD"/>
</dbReference>
<dbReference type="InterPro" id="IPR036291">
    <property type="entry name" value="NAD(P)-bd_dom_sf"/>
</dbReference>
<dbReference type="NCBIfam" id="TIGR01087">
    <property type="entry name" value="murD"/>
    <property type="match status" value="1"/>
</dbReference>
<dbReference type="PANTHER" id="PTHR43692">
    <property type="entry name" value="UDP-N-ACETYLMURAMOYLALANINE--D-GLUTAMATE LIGASE"/>
    <property type="match status" value="1"/>
</dbReference>
<dbReference type="PANTHER" id="PTHR43692:SF1">
    <property type="entry name" value="UDP-N-ACETYLMURAMOYLALANINE--D-GLUTAMATE LIGASE"/>
    <property type="match status" value="1"/>
</dbReference>
<dbReference type="Pfam" id="PF02875">
    <property type="entry name" value="Mur_ligase_C"/>
    <property type="match status" value="1"/>
</dbReference>
<dbReference type="Pfam" id="PF08245">
    <property type="entry name" value="Mur_ligase_M"/>
    <property type="match status" value="1"/>
</dbReference>
<dbReference type="SUPFAM" id="SSF53623">
    <property type="entry name" value="MurD-like peptide ligases, catalytic domain"/>
    <property type="match status" value="1"/>
</dbReference>
<dbReference type="SUPFAM" id="SSF53244">
    <property type="entry name" value="MurD-like peptide ligases, peptide-binding domain"/>
    <property type="match status" value="1"/>
</dbReference>
<dbReference type="SUPFAM" id="SSF51735">
    <property type="entry name" value="NAD(P)-binding Rossmann-fold domains"/>
    <property type="match status" value="1"/>
</dbReference>
<gene>
    <name evidence="1" type="primary">murD</name>
    <name type="ordered locus">BruAb1_1428</name>
</gene>
<accession>Q57C76</accession>
<reference key="1">
    <citation type="journal article" date="2005" name="J. Bacteriol.">
        <title>Completion of the genome sequence of Brucella abortus and comparison to the highly similar genomes of Brucella melitensis and Brucella suis.</title>
        <authorList>
            <person name="Halling S.M."/>
            <person name="Peterson-Burch B.D."/>
            <person name="Bricker B.J."/>
            <person name="Zuerner R.L."/>
            <person name="Qing Z."/>
            <person name="Li L.-L."/>
            <person name="Kapur V."/>
            <person name="Alt D.P."/>
            <person name="Olsen S.C."/>
        </authorList>
    </citation>
    <scope>NUCLEOTIDE SEQUENCE [LARGE SCALE GENOMIC DNA]</scope>
    <source>
        <strain>9-941</strain>
    </source>
</reference>
<proteinExistence type="inferred from homology"/>
<name>MURD_BRUAB</name>
<keyword id="KW-0067">ATP-binding</keyword>
<keyword id="KW-0131">Cell cycle</keyword>
<keyword id="KW-0132">Cell division</keyword>
<keyword id="KW-0133">Cell shape</keyword>
<keyword id="KW-0961">Cell wall biogenesis/degradation</keyword>
<keyword id="KW-0963">Cytoplasm</keyword>
<keyword id="KW-0436">Ligase</keyword>
<keyword id="KW-0547">Nucleotide-binding</keyword>
<keyword id="KW-0573">Peptidoglycan synthesis</keyword>
<evidence type="ECO:0000255" key="1">
    <source>
        <dbReference type="HAMAP-Rule" id="MF_00639"/>
    </source>
</evidence>
<sequence length="467" mass="48694">MIPITALKDKTVALFGLGGSGIATAKAIVAGGARIIAWDDNPDSVARAQSAGIATGDLRQADWSQFAVFVLSPGVPLTHPQPHWSVDLARAAGVEIIGDVELFVRERNHIAPDCPFIAITGTNGKSTTTALIAHIIKATGRDMQLGGNIGTAILTLEPPCADRFYVVECSSYQIDLAPSLNPTAGILLNLTPDHLDRHGSMENYAAIKERLVAASGTAIIGIDDAYCQAIADRLHGAGIRVVRISKEKHLDRGYFADGAKLLWAQDGEIDEIASLEGIGSLRGAHNAQNALAAIVACLSAGLSLEEIHAGLKSFPGLAHRMEQVGRRGKVLFVNDSKATNAEATAPALSSFPQNIYWIVGGVPKAGGINSLTAFFPRVAKAYLIGEAAAQFAATLGGAVPFEISDTLAAAVAHAAGDAGNDAAPEPVVLLSPACASFDQFQNFEKRGDAFRDAVLALPGVMPMRGGS</sequence>
<feature type="chain" id="PRO_0000108981" description="UDP-N-acetylmuramoylalanine--D-glutamate ligase">
    <location>
        <begin position="1"/>
        <end position="467"/>
    </location>
</feature>
<feature type="binding site" evidence="1">
    <location>
        <begin position="121"/>
        <end position="127"/>
    </location>
    <ligand>
        <name>ATP</name>
        <dbReference type="ChEBI" id="CHEBI:30616"/>
    </ligand>
</feature>
<organism>
    <name type="scientific">Brucella abortus biovar 1 (strain 9-941)</name>
    <dbReference type="NCBI Taxonomy" id="262698"/>
    <lineage>
        <taxon>Bacteria</taxon>
        <taxon>Pseudomonadati</taxon>
        <taxon>Pseudomonadota</taxon>
        <taxon>Alphaproteobacteria</taxon>
        <taxon>Hyphomicrobiales</taxon>
        <taxon>Brucellaceae</taxon>
        <taxon>Brucella/Ochrobactrum group</taxon>
        <taxon>Brucella</taxon>
    </lineage>
</organism>
<protein>
    <recommendedName>
        <fullName evidence="1">UDP-N-acetylmuramoylalanine--D-glutamate ligase</fullName>
        <ecNumber evidence="1">6.3.2.9</ecNumber>
    </recommendedName>
    <alternativeName>
        <fullName evidence="1">D-glutamic acid-adding enzyme</fullName>
    </alternativeName>
    <alternativeName>
        <fullName evidence="1">UDP-N-acetylmuramoyl-L-alanyl-D-glutamate synthetase</fullName>
    </alternativeName>
</protein>